<organism>
    <name type="scientific">Prochlorococcus marinus (strain MIT 9215)</name>
    <dbReference type="NCBI Taxonomy" id="93060"/>
    <lineage>
        <taxon>Bacteria</taxon>
        <taxon>Bacillati</taxon>
        <taxon>Cyanobacteriota</taxon>
        <taxon>Cyanophyceae</taxon>
        <taxon>Synechococcales</taxon>
        <taxon>Prochlorococcaceae</taxon>
        <taxon>Prochlorococcus</taxon>
    </lineage>
</organism>
<keyword id="KW-0131">Cell cycle</keyword>
<keyword id="KW-0132">Cell division</keyword>
<keyword id="KW-0997">Cell inner membrane</keyword>
<keyword id="KW-1003">Cell membrane</keyword>
<keyword id="KW-0133">Cell shape</keyword>
<keyword id="KW-0961">Cell wall biogenesis/degradation</keyword>
<keyword id="KW-0460">Magnesium</keyword>
<keyword id="KW-0472">Membrane</keyword>
<keyword id="KW-0479">Metal-binding</keyword>
<keyword id="KW-0573">Peptidoglycan synthesis</keyword>
<keyword id="KW-0808">Transferase</keyword>
<keyword id="KW-0812">Transmembrane</keyword>
<keyword id="KW-1133">Transmembrane helix</keyword>
<dbReference type="EC" id="2.7.8.13" evidence="1"/>
<dbReference type="EMBL" id="CP000825">
    <property type="protein sequence ID" value="ABV51595.1"/>
    <property type="molecule type" value="Genomic_DNA"/>
</dbReference>
<dbReference type="RefSeq" id="WP_012008581.1">
    <property type="nucleotide sequence ID" value="NC_009840.1"/>
</dbReference>
<dbReference type="SMR" id="A8G7L4"/>
<dbReference type="STRING" id="93060.P9215_19821"/>
<dbReference type="KEGG" id="pmh:P9215_19821"/>
<dbReference type="eggNOG" id="COG0472">
    <property type="taxonomic scope" value="Bacteria"/>
</dbReference>
<dbReference type="HOGENOM" id="CLU_023982_0_2_3"/>
<dbReference type="OrthoDB" id="9805475at2"/>
<dbReference type="UniPathway" id="UPA00219"/>
<dbReference type="Proteomes" id="UP000002014">
    <property type="component" value="Chromosome"/>
</dbReference>
<dbReference type="GO" id="GO:0005886">
    <property type="term" value="C:plasma membrane"/>
    <property type="evidence" value="ECO:0007669"/>
    <property type="project" value="UniProtKB-SubCell"/>
</dbReference>
<dbReference type="GO" id="GO:0046872">
    <property type="term" value="F:metal ion binding"/>
    <property type="evidence" value="ECO:0007669"/>
    <property type="project" value="UniProtKB-KW"/>
</dbReference>
<dbReference type="GO" id="GO:0008963">
    <property type="term" value="F:phospho-N-acetylmuramoyl-pentapeptide-transferase activity"/>
    <property type="evidence" value="ECO:0007669"/>
    <property type="project" value="UniProtKB-UniRule"/>
</dbReference>
<dbReference type="GO" id="GO:0051992">
    <property type="term" value="F:UDP-N-acetylmuramoyl-L-alanyl-D-glutamyl-meso-2,6-diaminopimelyl-D-alanyl-D-alanine:undecaprenyl-phosphate transferase activity"/>
    <property type="evidence" value="ECO:0007669"/>
    <property type="project" value="RHEA"/>
</dbReference>
<dbReference type="GO" id="GO:0051301">
    <property type="term" value="P:cell division"/>
    <property type="evidence" value="ECO:0007669"/>
    <property type="project" value="UniProtKB-KW"/>
</dbReference>
<dbReference type="GO" id="GO:0071555">
    <property type="term" value="P:cell wall organization"/>
    <property type="evidence" value="ECO:0007669"/>
    <property type="project" value="UniProtKB-KW"/>
</dbReference>
<dbReference type="GO" id="GO:0009252">
    <property type="term" value="P:peptidoglycan biosynthetic process"/>
    <property type="evidence" value="ECO:0007669"/>
    <property type="project" value="UniProtKB-UniRule"/>
</dbReference>
<dbReference type="GO" id="GO:0008360">
    <property type="term" value="P:regulation of cell shape"/>
    <property type="evidence" value="ECO:0007669"/>
    <property type="project" value="UniProtKB-KW"/>
</dbReference>
<dbReference type="CDD" id="cd06852">
    <property type="entry name" value="GT_MraY"/>
    <property type="match status" value="1"/>
</dbReference>
<dbReference type="HAMAP" id="MF_00038">
    <property type="entry name" value="MraY"/>
    <property type="match status" value="1"/>
</dbReference>
<dbReference type="InterPro" id="IPR000715">
    <property type="entry name" value="Glycosyl_transferase_4"/>
</dbReference>
<dbReference type="InterPro" id="IPR003524">
    <property type="entry name" value="PNAcMuramoyl-5peptid_Trfase"/>
</dbReference>
<dbReference type="InterPro" id="IPR018480">
    <property type="entry name" value="PNAcMuramoyl-5peptid_Trfase_CS"/>
</dbReference>
<dbReference type="NCBIfam" id="TIGR00445">
    <property type="entry name" value="mraY"/>
    <property type="match status" value="1"/>
</dbReference>
<dbReference type="PANTHER" id="PTHR22926">
    <property type="entry name" value="PHOSPHO-N-ACETYLMURAMOYL-PENTAPEPTIDE-TRANSFERASE"/>
    <property type="match status" value="1"/>
</dbReference>
<dbReference type="PANTHER" id="PTHR22926:SF5">
    <property type="entry name" value="PHOSPHO-N-ACETYLMURAMOYL-PENTAPEPTIDE-TRANSFERASE HOMOLOG"/>
    <property type="match status" value="1"/>
</dbReference>
<dbReference type="Pfam" id="PF00953">
    <property type="entry name" value="Glycos_transf_4"/>
    <property type="match status" value="1"/>
</dbReference>
<dbReference type="Pfam" id="PF10555">
    <property type="entry name" value="MraY_sig1"/>
    <property type="match status" value="1"/>
</dbReference>
<dbReference type="PROSITE" id="PS01347">
    <property type="entry name" value="MRAY_1"/>
    <property type="match status" value="1"/>
</dbReference>
<dbReference type="PROSITE" id="PS01348">
    <property type="entry name" value="MRAY_2"/>
    <property type="match status" value="1"/>
</dbReference>
<protein>
    <recommendedName>
        <fullName evidence="1">Phospho-N-acetylmuramoyl-pentapeptide-transferase</fullName>
        <ecNumber evidence="1">2.7.8.13</ecNumber>
    </recommendedName>
    <alternativeName>
        <fullName evidence="1">UDP-MurNAc-pentapeptide phosphotransferase</fullName>
    </alternativeName>
</protein>
<comment type="function">
    <text evidence="1">Catalyzes the initial step of the lipid cycle reactions in the biosynthesis of the cell wall peptidoglycan: transfers peptidoglycan precursor phospho-MurNAc-pentapeptide from UDP-MurNAc-pentapeptide onto the lipid carrier undecaprenyl phosphate, yielding undecaprenyl-pyrophosphoryl-MurNAc-pentapeptide, known as lipid I.</text>
</comment>
<comment type="catalytic activity">
    <reaction evidence="1">
        <text>UDP-N-acetyl-alpha-D-muramoyl-L-alanyl-gamma-D-glutamyl-meso-2,6-diaminopimeloyl-D-alanyl-D-alanine + di-trans,octa-cis-undecaprenyl phosphate = di-trans,octa-cis-undecaprenyl diphospho-N-acetyl-alpha-D-muramoyl-L-alanyl-D-glutamyl-meso-2,6-diaminopimeloyl-D-alanyl-D-alanine + UMP</text>
        <dbReference type="Rhea" id="RHEA:28386"/>
        <dbReference type="ChEBI" id="CHEBI:57865"/>
        <dbReference type="ChEBI" id="CHEBI:60392"/>
        <dbReference type="ChEBI" id="CHEBI:61386"/>
        <dbReference type="ChEBI" id="CHEBI:61387"/>
        <dbReference type="EC" id="2.7.8.13"/>
    </reaction>
</comment>
<comment type="cofactor">
    <cofactor evidence="1">
        <name>Mg(2+)</name>
        <dbReference type="ChEBI" id="CHEBI:18420"/>
    </cofactor>
</comment>
<comment type="pathway">
    <text evidence="1">Cell wall biogenesis; peptidoglycan biosynthesis.</text>
</comment>
<comment type="subcellular location">
    <subcellularLocation>
        <location evidence="1">Cell inner membrane</location>
        <topology evidence="1">Multi-pass membrane protein</topology>
    </subcellularLocation>
</comment>
<comment type="similarity">
    <text evidence="1">Belongs to the glycosyltransferase 4 family. MraY subfamily.</text>
</comment>
<accession>A8G7L4</accession>
<feature type="chain" id="PRO_1000057281" description="Phospho-N-acetylmuramoyl-pentapeptide-transferase">
    <location>
        <begin position="1"/>
        <end position="358"/>
    </location>
</feature>
<feature type="transmembrane region" description="Helical" evidence="1">
    <location>
        <begin position="27"/>
        <end position="47"/>
    </location>
</feature>
<feature type="transmembrane region" description="Helical" evidence="1">
    <location>
        <begin position="81"/>
        <end position="101"/>
    </location>
</feature>
<feature type="transmembrane region" description="Helical" evidence="1">
    <location>
        <begin position="106"/>
        <end position="126"/>
    </location>
</feature>
<feature type="transmembrane region" description="Helical" evidence="1">
    <location>
        <begin position="147"/>
        <end position="167"/>
    </location>
</feature>
<feature type="transmembrane region" description="Helical" evidence="1">
    <location>
        <begin position="171"/>
        <end position="191"/>
    </location>
</feature>
<feature type="transmembrane region" description="Helical" evidence="1">
    <location>
        <begin position="201"/>
        <end position="221"/>
    </location>
</feature>
<feature type="transmembrane region" description="Helical" evidence="1">
    <location>
        <begin position="228"/>
        <end position="248"/>
    </location>
</feature>
<feature type="transmembrane region" description="Helical" evidence="1">
    <location>
        <begin position="255"/>
        <end position="275"/>
    </location>
</feature>
<feature type="transmembrane region" description="Helical" evidence="1">
    <location>
        <begin position="278"/>
        <end position="298"/>
    </location>
</feature>
<feature type="transmembrane region" description="Helical" evidence="1">
    <location>
        <begin position="336"/>
        <end position="356"/>
    </location>
</feature>
<proteinExistence type="inferred from homology"/>
<sequence>MIGKINKFNFKSLLVLNTFALIATSYLFNNFIFIGVFILFFFLSLFATKNGLEIIRKLNLLQNIRTEGPSNHFQKSNTPTMGGVFLMIPFFILLLIITINLSSLKLFLLLLTIFGFYITGFLDDYLSIKNKENTGLKTKEKFILQSVISIIFILLAYEKNLINPLVILSDSWVINMNIFILPISFLVLVGISNSVNLTDGLDGLAAGCSGIVFYGLGTEILMKEQQELFVFSILCFSMSGLCLGFLKYNSYPAKIFMGDTGSLSIGATLGTIALLTNSVFTLSIFSGIFIIESLSVIIQVGVFKITKKLFHRGKRIFLMAPLHHHFELKGVKEQKIVENFWKINILLIILGIVLKIKL</sequence>
<gene>
    <name evidence="1" type="primary">mraY</name>
    <name type="ordered locus">P9215_19821</name>
</gene>
<reference key="1">
    <citation type="journal article" date="2007" name="PLoS Genet.">
        <title>Patterns and implications of gene gain and loss in the evolution of Prochlorococcus.</title>
        <authorList>
            <person name="Kettler G.C."/>
            <person name="Martiny A.C."/>
            <person name="Huang K."/>
            <person name="Zucker J."/>
            <person name="Coleman M.L."/>
            <person name="Rodrigue S."/>
            <person name="Chen F."/>
            <person name="Lapidus A."/>
            <person name="Ferriera S."/>
            <person name="Johnson J."/>
            <person name="Steglich C."/>
            <person name="Church G.M."/>
            <person name="Richardson P."/>
            <person name="Chisholm S.W."/>
        </authorList>
    </citation>
    <scope>NUCLEOTIDE SEQUENCE [LARGE SCALE GENOMIC DNA]</scope>
    <source>
        <strain>MIT 9215</strain>
    </source>
</reference>
<name>MRAY_PROM2</name>
<evidence type="ECO:0000255" key="1">
    <source>
        <dbReference type="HAMAP-Rule" id="MF_00038"/>
    </source>
</evidence>